<organism>
    <name type="scientific">Homo sapiens</name>
    <name type="common">Human</name>
    <dbReference type="NCBI Taxonomy" id="9606"/>
    <lineage>
        <taxon>Eukaryota</taxon>
        <taxon>Metazoa</taxon>
        <taxon>Chordata</taxon>
        <taxon>Craniata</taxon>
        <taxon>Vertebrata</taxon>
        <taxon>Euteleostomi</taxon>
        <taxon>Mammalia</taxon>
        <taxon>Eutheria</taxon>
        <taxon>Euarchontoglires</taxon>
        <taxon>Primates</taxon>
        <taxon>Haplorrhini</taxon>
        <taxon>Catarrhini</taxon>
        <taxon>Hominidae</taxon>
        <taxon>Homo</taxon>
    </lineage>
</organism>
<proteinExistence type="evidence at protein level"/>
<evidence type="ECO:0000250" key="1">
    <source>
        <dbReference type="UniProtKB" id="O88685"/>
    </source>
</evidence>
<evidence type="ECO:0000255" key="2"/>
<evidence type="ECO:0000269" key="3">
    <source>
    </source>
</evidence>
<evidence type="ECO:0000269" key="4">
    <source>
    </source>
</evidence>
<evidence type="ECO:0000269" key="5">
    <source>
    </source>
</evidence>
<evidence type="ECO:0000269" key="6">
    <source>
    </source>
</evidence>
<evidence type="ECO:0000269" key="7">
    <source>
    </source>
</evidence>
<evidence type="ECO:0000269" key="8">
    <source>
    </source>
</evidence>
<evidence type="ECO:0000269" key="9">
    <source>
    </source>
</evidence>
<evidence type="ECO:0000305" key="10"/>
<evidence type="ECO:0007744" key="11">
    <source>
    </source>
</evidence>
<evidence type="ECO:0007744" key="12">
    <source>
    </source>
</evidence>
<evidence type="ECO:0007744" key="13">
    <source>
    </source>
</evidence>
<evidence type="ECO:0007744" key="14">
    <source>
    </source>
</evidence>
<evidence type="ECO:0007744" key="15">
    <source>
    </source>
</evidence>
<evidence type="ECO:0007744" key="16">
    <source>
    </source>
</evidence>
<evidence type="ECO:0007829" key="17">
    <source>
        <dbReference type="PDB" id="9E8J"/>
    </source>
</evidence>
<reference key="1">
    <citation type="journal article" date="1993" name="Proc. Natl. Acad. Sci. U.S.A.">
        <title>The type 1 human immunodeficiency virus Tat binding protein is a transcriptional activator belonging to an additional family of evolutionarily conserved genes.</title>
        <authorList>
            <person name="Ohana B."/>
            <person name="Moore P.A."/>
            <person name="Ruben S.M."/>
            <person name="Southgate C.D."/>
            <person name="Green M.R."/>
            <person name="Rosen C.A."/>
        </authorList>
    </citation>
    <scope>NUCLEOTIDE SEQUENCE [MRNA]</scope>
</reference>
<reference key="2">
    <citation type="journal article" date="2004" name="Nat. Genet.">
        <title>Complete sequencing and characterization of 21,243 full-length human cDNAs.</title>
        <authorList>
            <person name="Ota T."/>
            <person name="Suzuki Y."/>
            <person name="Nishikawa T."/>
            <person name="Otsuki T."/>
            <person name="Sugiyama T."/>
            <person name="Irie R."/>
            <person name="Wakamatsu A."/>
            <person name="Hayashi K."/>
            <person name="Sato H."/>
            <person name="Nagai K."/>
            <person name="Kimura K."/>
            <person name="Makita H."/>
            <person name="Sekine M."/>
            <person name="Obayashi M."/>
            <person name="Nishi T."/>
            <person name="Shibahara T."/>
            <person name="Tanaka T."/>
            <person name="Ishii S."/>
            <person name="Yamamoto J."/>
            <person name="Saito K."/>
            <person name="Kawai Y."/>
            <person name="Isono Y."/>
            <person name="Nakamura Y."/>
            <person name="Nagahari K."/>
            <person name="Murakami K."/>
            <person name="Yasuda T."/>
            <person name="Iwayanagi T."/>
            <person name="Wagatsuma M."/>
            <person name="Shiratori A."/>
            <person name="Sudo H."/>
            <person name="Hosoiri T."/>
            <person name="Kaku Y."/>
            <person name="Kodaira H."/>
            <person name="Kondo H."/>
            <person name="Sugawara M."/>
            <person name="Takahashi M."/>
            <person name="Kanda K."/>
            <person name="Yokoi T."/>
            <person name="Furuya T."/>
            <person name="Kikkawa E."/>
            <person name="Omura Y."/>
            <person name="Abe K."/>
            <person name="Kamihara K."/>
            <person name="Katsuta N."/>
            <person name="Sato K."/>
            <person name="Tanikawa M."/>
            <person name="Yamazaki M."/>
            <person name="Ninomiya K."/>
            <person name="Ishibashi T."/>
            <person name="Yamashita H."/>
            <person name="Murakawa K."/>
            <person name="Fujimori K."/>
            <person name="Tanai H."/>
            <person name="Kimata M."/>
            <person name="Watanabe M."/>
            <person name="Hiraoka S."/>
            <person name="Chiba Y."/>
            <person name="Ishida S."/>
            <person name="Ono Y."/>
            <person name="Takiguchi S."/>
            <person name="Watanabe S."/>
            <person name="Yosida M."/>
            <person name="Hotuta T."/>
            <person name="Kusano J."/>
            <person name="Kanehori K."/>
            <person name="Takahashi-Fujii A."/>
            <person name="Hara H."/>
            <person name="Tanase T.-O."/>
            <person name="Nomura Y."/>
            <person name="Togiya S."/>
            <person name="Komai F."/>
            <person name="Hara R."/>
            <person name="Takeuchi K."/>
            <person name="Arita M."/>
            <person name="Imose N."/>
            <person name="Musashino K."/>
            <person name="Yuuki H."/>
            <person name="Oshima A."/>
            <person name="Sasaki N."/>
            <person name="Aotsuka S."/>
            <person name="Yoshikawa Y."/>
            <person name="Matsunawa H."/>
            <person name="Ichihara T."/>
            <person name="Shiohata N."/>
            <person name="Sano S."/>
            <person name="Moriya S."/>
            <person name="Momiyama H."/>
            <person name="Satoh N."/>
            <person name="Takami S."/>
            <person name="Terashima Y."/>
            <person name="Suzuki O."/>
            <person name="Nakagawa S."/>
            <person name="Senoh A."/>
            <person name="Mizoguchi H."/>
            <person name="Goto Y."/>
            <person name="Shimizu F."/>
            <person name="Wakebe H."/>
            <person name="Hishigaki H."/>
            <person name="Watanabe T."/>
            <person name="Sugiyama A."/>
            <person name="Takemoto M."/>
            <person name="Kawakami B."/>
            <person name="Yamazaki M."/>
            <person name="Watanabe K."/>
            <person name="Kumagai A."/>
            <person name="Itakura S."/>
            <person name="Fukuzumi Y."/>
            <person name="Fujimori Y."/>
            <person name="Komiyama M."/>
            <person name="Tashiro H."/>
            <person name="Tanigami A."/>
            <person name="Fujiwara T."/>
            <person name="Ono T."/>
            <person name="Yamada K."/>
            <person name="Fujii Y."/>
            <person name="Ozaki K."/>
            <person name="Hirao M."/>
            <person name="Ohmori Y."/>
            <person name="Kawabata A."/>
            <person name="Hikiji T."/>
            <person name="Kobatake N."/>
            <person name="Inagaki H."/>
            <person name="Ikema Y."/>
            <person name="Okamoto S."/>
            <person name="Okitani R."/>
            <person name="Kawakami T."/>
            <person name="Noguchi S."/>
            <person name="Itoh T."/>
            <person name="Shigeta K."/>
            <person name="Senba T."/>
            <person name="Matsumura K."/>
            <person name="Nakajima Y."/>
            <person name="Mizuno T."/>
            <person name="Morinaga M."/>
            <person name="Sasaki M."/>
            <person name="Togashi T."/>
            <person name="Oyama M."/>
            <person name="Hata H."/>
            <person name="Watanabe M."/>
            <person name="Komatsu T."/>
            <person name="Mizushima-Sugano J."/>
            <person name="Satoh T."/>
            <person name="Shirai Y."/>
            <person name="Takahashi Y."/>
            <person name="Nakagawa K."/>
            <person name="Okumura K."/>
            <person name="Nagase T."/>
            <person name="Nomura N."/>
            <person name="Kikuchi H."/>
            <person name="Masuho Y."/>
            <person name="Yamashita R."/>
            <person name="Nakai K."/>
            <person name="Yada T."/>
            <person name="Nakamura Y."/>
            <person name="Ohara O."/>
            <person name="Isogai T."/>
            <person name="Sugano S."/>
        </authorList>
    </citation>
    <scope>NUCLEOTIDE SEQUENCE [LARGE SCALE MRNA]</scope>
</reference>
<reference key="3">
    <citation type="submission" date="2005-09" db="EMBL/GenBank/DDBJ databases">
        <authorList>
            <person name="Mural R.J."/>
            <person name="Istrail S."/>
            <person name="Sutton G.G."/>
            <person name="Florea L."/>
            <person name="Halpern A.L."/>
            <person name="Mobarry C.M."/>
            <person name="Lippert R."/>
            <person name="Walenz B."/>
            <person name="Shatkay H."/>
            <person name="Dew I."/>
            <person name="Miller J.R."/>
            <person name="Flanigan M.J."/>
            <person name="Edwards N.J."/>
            <person name="Bolanos R."/>
            <person name="Fasulo D."/>
            <person name="Halldorsson B.V."/>
            <person name="Hannenhalli S."/>
            <person name="Turner R."/>
            <person name="Yooseph S."/>
            <person name="Lu F."/>
            <person name="Nusskern D.R."/>
            <person name="Shue B.C."/>
            <person name="Zheng X.H."/>
            <person name="Zhong F."/>
            <person name="Delcher A.L."/>
            <person name="Huson D.H."/>
            <person name="Kravitz S.A."/>
            <person name="Mouchard L."/>
            <person name="Reinert K."/>
            <person name="Remington K.A."/>
            <person name="Clark A.G."/>
            <person name="Waterman M.S."/>
            <person name="Eichler E.E."/>
            <person name="Adams M.D."/>
            <person name="Hunkapiller M.W."/>
            <person name="Myers E.W."/>
            <person name="Venter J.C."/>
        </authorList>
    </citation>
    <scope>NUCLEOTIDE SEQUENCE [LARGE SCALE GENOMIC DNA]</scope>
</reference>
<reference key="4">
    <citation type="journal article" date="2004" name="Genome Res.">
        <title>The status, quality, and expansion of the NIH full-length cDNA project: the Mammalian Gene Collection (MGC).</title>
        <authorList>
            <consortium name="The MGC Project Team"/>
        </authorList>
    </citation>
    <scope>NUCLEOTIDE SEQUENCE [LARGE SCALE MRNA]</scope>
    <source>
        <tissue>Kidney</tissue>
        <tissue>Lung</tissue>
        <tissue>Peripheral nerve</tissue>
    </source>
</reference>
<reference key="5">
    <citation type="submission" date="2005-04" db="EMBL/GenBank/DDBJ databases">
        <authorList>
            <person name="Suzuki Y."/>
            <person name="Sugano S."/>
            <person name="Totoki Y."/>
            <person name="Toyoda A."/>
            <person name="Takeda T."/>
            <person name="Sakaki Y."/>
            <person name="Tanaka A."/>
            <person name="Yokoyama S."/>
        </authorList>
    </citation>
    <scope>NUCLEOTIDE SEQUENCE [LARGE SCALE MRNA] OF 16-439</scope>
    <source>
        <tissue>Adipose tissue</tissue>
    </source>
</reference>
<reference key="6">
    <citation type="journal article" date="1990" name="Science">
        <title>A cDNA for a protein that interacts with the human immunodeficiency virus Tat transactivator.</title>
        <authorList>
            <person name="Nelbock P."/>
            <person name="Dillion P.J."/>
            <person name="Perkins A."/>
            <person name="Rosen C.A."/>
        </authorList>
    </citation>
    <scope>NUCLEOTIDE SEQUENCE [MRNA] OF 36-439</scope>
    <scope>INTERACTION WITH HIV-1 TAT</scope>
</reference>
<reference key="7">
    <citation type="submission" date="2004-06" db="EMBL/GenBank/DDBJ databases">
        <title>Cloning of human full open reading frames in Gateway(TM) system entry vector (pDONR201).</title>
        <authorList>
            <person name="Ebert L."/>
            <person name="Schick M."/>
            <person name="Neubert P."/>
            <person name="Schatten R."/>
            <person name="Henze S."/>
            <person name="Korn B."/>
        </authorList>
    </citation>
    <scope>NUCLEOTIDE SEQUENCE [LARGE SCALE MRNA] OF 36-439</scope>
</reference>
<reference key="8">
    <citation type="submission" date="2008-12" db="UniProtKB">
        <authorList>
            <person name="Lubec G."/>
            <person name="Afjehi-Sadat L."/>
            <person name="Chen W.-Q."/>
            <person name="Sun Y."/>
        </authorList>
    </citation>
    <scope>PROTEIN SEQUENCE OF 130-144; 156-171; 174-233; 251-266; 277-294; 309-327; 335-344; 351-362; 372-386 AND 398-409</scope>
    <scope>IDENTIFICATION BY MASS SPECTROMETRY</scope>
    <source>
        <tissue>Brain</tissue>
        <tissue>Cajal-Retzius cell</tissue>
        <tissue>Fetal brain cortex</tissue>
    </source>
</reference>
<reference key="9">
    <citation type="journal article" date="1996" name="J. Biol. Chem.">
        <title>Identification, purification, and characterization of a PA700-dependent activator of the proteasome.</title>
        <authorList>
            <person name="Demartino G.N."/>
            <person name="Proske R.J."/>
            <person name="Moomaw C.R."/>
            <person name="Strong A.A."/>
            <person name="Song X."/>
            <person name="Hisamatsu H."/>
            <person name="Tanaka K."/>
            <person name="Slaughter C.A."/>
        </authorList>
    </citation>
    <scope>PARTIAL PROTEIN SEQUENCE</scope>
</reference>
<reference key="10">
    <citation type="journal article" date="1992" name="Eur. J. Biochem.">
        <title>Demonstration that a human 26S proteolytic complex consists of a proteasome and multiple associated protein components and hydrolyzes ATP and ubiquitin-ligated proteins by closely linked mechanisms.</title>
        <authorList>
            <person name="Kanayama H.O."/>
            <person name="Tamura T."/>
            <person name="Ugai S."/>
            <person name="Kagawa S."/>
            <person name="Tanahashi N."/>
            <person name="Yoshimura T."/>
            <person name="Tanaka K."/>
            <person name="Ichihara A."/>
        </authorList>
    </citation>
    <scope>FUNCTION</scope>
</reference>
<reference key="11">
    <citation type="journal article" date="2005" name="Mol. Cell. Biol.">
        <title>Proteasomal ATPase-associated factor 1 negatively regulates proteasome activity by interacting with proteasomal ATPases.</title>
        <authorList>
            <person name="Park Y."/>
            <person name="Hwang Y.-P."/>
            <person name="Lee J.-S."/>
            <person name="Seo S.-H."/>
            <person name="Yoon S.K."/>
            <person name="Yoon J.-B."/>
        </authorList>
    </citation>
    <scope>INTERACTION WITH PAAF1</scope>
</reference>
<reference key="12">
    <citation type="journal article" date="2007" name="Biochemistry">
        <title>Mass spectrometric characterization of the affinity-purified human 26S proteasome complex.</title>
        <authorList>
            <person name="Wang X."/>
            <person name="Chen C.-F."/>
            <person name="Baker P.R."/>
            <person name="Chen P.-L."/>
            <person name="Kaiser P."/>
            <person name="Huang L."/>
        </authorList>
    </citation>
    <scope>PHOSPHORYLATION [LARGE SCALE ANALYSIS] AT SER-9</scope>
    <scope>IDENTIFICATION BY MASS SPECTROMETRY [LARGE SCALE ANALYSIS]</scope>
    <source>
        <tissue>Embryonic kidney</tissue>
    </source>
</reference>
<reference key="13">
    <citation type="journal article" date="2007" name="Nucleic Acids Res.">
        <title>Ubc9 fusion-directed SUMOylation identifies constitutive and inducible SUMOylation.</title>
        <authorList>
            <person name="Jakobs A."/>
            <person name="Himstedt F."/>
            <person name="Funk M."/>
            <person name="Korn B."/>
            <person name="Gaestel M."/>
            <person name="Niedenthal R."/>
        </authorList>
    </citation>
    <scope>SUMOYLATION</scope>
</reference>
<reference key="14">
    <citation type="journal article" date="2009" name="Anal. Chem.">
        <title>Lys-N and trypsin cover complementary parts of the phosphoproteome in a refined SCX-based approach.</title>
        <authorList>
            <person name="Gauci S."/>
            <person name="Helbig A.O."/>
            <person name="Slijper M."/>
            <person name="Krijgsveld J."/>
            <person name="Heck A.J."/>
            <person name="Mohammed S."/>
        </authorList>
    </citation>
    <scope>ACETYLATION [LARGE SCALE ANALYSIS] AT MET-1</scope>
    <scope>IDENTIFICATION BY MASS SPECTROMETRY [LARGE SCALE ANALYSIS]</scope>
</reference>
<reference key="15">
    <citation type="journal article" date="2010" name="Sci. Signal.">
        <title>Quantitative phosphoproteomics reveals widespread full phosphorylation site occupancy during mitosis.</title>
        <authorList>
            <person name="Olsen J.V."/>
            <person name="Vermeulen M."/>
            <person name="Santamaria A."/>
            <person name="Kumar C."/>
            <person name="Miller M.L."/>
            <person name="Jensen L.J."/>
            <person name="Gnad F."/>
            <person name="Cox J."/>
            <person name="Jensen T.S."/>
            <person name="Nigg E.A."/>
            <person name="Brunak S."/>
            <person name="Mann M."/>
        </authorList>
    </citation>
    <scope>ACETYLATION [LARGE SCALE ANALYSIS] AT MET-1</scope>
    <scope>PHOSPHORYLATION [LARGE SCALE ANALYSIS] AT SER-9</scope>
    <scope>IDENTIFICATION BY MASS SPECTROMETRY [LARGE SCALE ANALYSIS]</scope>
    <source>
        <tissue>Cervix carcinoma</tissue>
    </source>
</reference>
<reference key="16">
    <citation type="journal article" date="2011" name="BMC Syst. Biol.">
        <title>Initial characterization of the human central proteome.</title>
        <authorList>
            <person name="Burkard T.R."/>
            <person name="Planyavsky M."/>
            <person name="Kaupe I."/>
            <person name="Breitwieser F.P."/>
            <person name="Buerckstuemmer T."/>
            <person name="Bennett K.L."/>
            <person name="Superti-Furga G."/>
            <person name="Colinge J."/>
        </authorList>
    </citation>
    <scope>IDENTIFICATION BY MASS SPECTROMETRY [LARGE SCALE ANALYSIS]</scope>
</reference>
<reference key="17">
    <citation type="journal article" date="2011" name="Sci. Signal.">
        <title>System-wide temporal characterization of the proteome and phosphoproteome of human embryonic stem cell differentiation.</title>
        <authorList>
            <person name="Rigbolt K.T."/>
            <person name="Prokhorova T.A."/>
            <person name="Akimov V."/>
            <person name="Henningsen J."/>
            <person name="Johansen P.T."/>
            <person name="Kratchmarova I."/>
            <person name="Kassem M."/>
            <person name="Mann M."/>
            <person name="Olsen J.V."/>
            <person name="Blagoev B."/>
        </authorList>
    </citation>
    <scope>ACETYLATION [LARGE SCALE ANALYSIS] AT MET-1</scope>
    <scope>PHOSPHORYLATION [LARGE SCALE ANALYSIS] AT SER-9</scope>
    <scope>IDENTIFICATION BY MASS SPECTROMETRY [LARGE SCALE ANALYSIS]</scope>
</reference>
<reference key="18">
    <citation type="journal article" date="2012" name="Proc. Natl. Acad. Sci. U.S.A.">
        <title>N-terminal acetylome analyses and functional insights of the N-terminal acetyltransferase NatB.</title>
        <authorList>
            <person name="Van Damme P."/>
            <person name="Lasa M."/>
            <person name="Polevoda B."/>
            <person name="Gazquez C."/>
            <person name="Elosegui-Artola A."/>
            <person name="Kim D.S."/>
            <person name="De Juan-Pardo E."/>
            <person name="Demeyer K."/>
            <person name="Hole K."/>
            <person name="Larrea E."/>
            <person name="Timmerman E."/>
            <person name="Prieto J."/>
            <person name="Arnesen T."/>
            <person name="Sherman F."/>
            <person name="Gevaert K."/>
            <person name="Aldabe R."/>
        </authorList>
    </citation>
    <scope>ACETYLATION [LARGE SCALE ANALYSIS] AT MET-1</scope>
    <scope>IDENTIFICATION BY MASS SPECTROMETRY [LARGE SCALE ANALYSIS]</scope>
</reference>
<reference key="19">
    <citation type="journal article" date="2013" name="J. Proteome Res.">
        <title>Toward a comprehensive characterization of a human cancer cell phosphoproteome.</title>
        <authorList>
            <person name="Zhou H."/>
            <person name="Di Palma S."/>
            <person name="Preisinger C."/>
            <person name="Peng M."/>
            <person name="Polat A.N."/>
            <person name="Heck A.J."/>
            <person name="Mohammed S."/>
        </authorList>
    </citation>
    <scope>PHOSPHORYLATION [LARGE SCALE ANALYSIS] AT SER-9 AND SER-376</scope>
    <scope>IDENTIFICATION BY MASS SPECTROMETRY [LARGE SCALE ANALYSIS]</scope>
    <source>
        <tissue>Cervix carcinoma</tissue>
        <tissue>Erythroleukemia</tissue>
    </source>
</reference>
<reference key="20">
    <citation type="journal article" date="2014" name="J. Proteomics">
        <title>An enzyme assisted RP-RPLC approach for in-depth analysis of human liver phosphoproteome.</title>
        <authorList>
            <person name="Bian Y."/>
            <person name="Song C."/>
            <person name="Cheng K."/>
            <person name="Dong M."/>
            <person name="Wang F."/>
            <person name="Huang J."/>
            <person name="Sun D."/>
            <person name="Wang L."/>
            <person name="Ye M."/>
            <person name="Zou H."/>
        </authorList>
    </citation>
    <scope>IDENTIFICATION BY MASS SPECTROMETRY [LARGE SCALE ANALYSIS]</scope>
    <source>
        <tissue>Liver</tissue>
    </source>
</reference>
<reference key="21">
    <citation type="journal article" date="2016" name="Nat. Struct. Mol. Biol.">
        <title>An atomic structure of the human 26S proteasome.</title>
        <authorList>
            <person name="Huang X."/>
            <person name="Luan B."/>
            <person name="Wu J."/>
            <person name="Shi Y."/>
        </authorList>
    </citation>
    <scope>STRUCTURE BY ELECTRON MICROSCOPY (3.50 ANGSTROMS) OF 1-440</scope>
    <scope>SUBUNIT</scope>
</reference>
<reference key="22">
    <citation type="journal article" date="2016" name="Proc. Natl. Acad. Sci. U.S.A.">
        <title>Structure of the human 26S proteasome at a resolution of 3.9 Aa.</title>
        <authorList>
            <person name="Schweitzer A."/>
            <person name="Aufderheide A."/>
            <person name="Rudack T."/>
            <person name="Beck F."/>
            <person name="Pfeifer G."/>
            <person name="Plitzko J.M."/>
            <person name="Sakata E."/>
            <person name="Schulten K."/>
            <person name="Foerster F."/>
            <person name="Baumeister W."/>
        </authorList>
    </citation>
    <scope>STRUCTURE BY ELECTRON MICROSCOPY (4.02 ANGSTROMS) OF 1-440</scope>
    <scope>SUBUNIT</scope>
</reference>
<reference key="23">
    <citation type="journal article" date="2020" name="EMBO Mol. Med.">
        <title>Proteasome subunit PSMC3 variants cause neurosensory syndrome combining deafness and cataract due to proteotoxic stress.</title>
        <authorList>
            <person name="Kroell-Hermi A."/>
            <person name="Ebstein F."/>
            <person name="Stoetzel C."/>
            <person name="Geoffroy V."/>
            <person name="Schaefer E."/>
            <person name="Scheidecker S."/>
            <person name="Baer S."/>
            <person name="Takamiya M."/>
            <person name="Kawakami K."/>
            <person name="Zieba B.A."/>
            <person name="Studer F."/>
            <person name="Pelletier V."/>
            <person name="Eyermann C."/>
            <person name="Speeg-Schatz C."/>
            <person name="Laugel V."/>
            <person name="Lipsker D."/>
            <person name="Sandron F."/>
            <person name="McGinn S."/>
            <person name="Boland A."/>
            <person name="Deleuze J.F."/>
            <person name="Kuhn L."/>
            <person name="Chicher J."/>
            <person name="Hammann P."/>
            <person name="Friant S."/>
            <person name="Etard C."/>
            <person name="Krueger E."/>
            <person name="Muller J."/>
            <person name="Straehle U."/>
            <person name="Dollfus H."/>
        </authorList>
    </citation>
    <scope>INVOLVEMENT IN DCIDP</scope>
</reference>
<protein>
    <recommendedName>
        <fullName>26S proteasome regulatory subunit 6A</fullName>
    </recommendedName>
    <alternativeName>
        <fullName>26S proteasome AAA-ATPase subunit RPT5</fullName>
    </alternativeName>
    <alternativeName>
        <fullName>Proteasome 26S subunit ATPase 3</fullName>
    </alternativeName>
    <alternativeName>
        <fullName>Proteasome subunit P50</fullName>
    </alternativeName>
    <alternativeName>
        <fullName>Tat-binding protein 1</fullName>
        <shortName>TBP-1</shortName>
    </alternativeName>
</protein>
<feature type="chain" id="PRO_0000084698" description="26S proteasome regulatory subunit 6A">
    <location>
        <begin position="1"/>
        <end position="439"/>
    </location>
</feature>
<feature type="binding site" evidence="2">
    <location>
        <begin position="227"/>
        <end position="234"/>
    </location>
    <ligand>
        <name>ATP</name>
        <dbReference type="ChEBI" id="CHEBI:30616"/>
    </ligand>
</feature>
<feature type="modified residue" description="N-acetylmethionine" evidence="12 13 14 15">
    <location>
        <position position="1"/>
    </location>
</feature>
<feature type="modified residue" description="Phosphoserine" evidence="11 13 14 16">
    <location>
        <position position="9"/>
    </location>
</feature>
<feature type="modified residue" description="Phosphoserine" evidence="16">
    <location>
        <position position="376"/>
    </location>
</feature>
<feature type="sequence conflict" description="In Ref. 5; BAD96205." evidence="10" ref="5">
    <original>M</original>
    <variation>T</variation>
    <location>
        <position position="356"/>
    </location>
</feature>
<feature type="sequence conflict" description="In Ref. 6; AAA36666." evidence="10" ref="6">
    <original>R</original>
    <variation>A</variation>
    <location>
        <position position="409"/>
    </location>
</feature>
<feature type="helix" evidence="17">
    <location>
        <begin position="59"/>
        <end position="84"/>
    </location>
</feature>
<feature type="strand" evidence="17">
    <location>
        <begin position="88"/>
        <end position="90"/>
    </location>
</feature>
<feature type="strand" evidence="17">
    <location>
        <begin position="92"/>
        <end position="95"/>
    </location>
</feature>
<feature type="strand" evidence="17">
    <location>
        <begin position="122"/>
        <end position="125"/>
    </location>
</feature>
<feature type="strand" evidence="17">
    <location>
        <begin position="131"/>
        <end position="136"/>
    </location>
</feature>
<feature type="strand" evidence="17">
    <location>
        <begin position="138"/>
        <end position="140"/>
    </location>
</feature>
<feature type="helix" evidence="17">
    <location>
        <begin position="142"/>
        <end position="144"/>
    </location>
</feature>
<feature type="strand" evidence="17">
    <location>
        <begin position="151"/>
        <end position="154"/>
    </location>
</feature>
<feature type="turn" evidence="17">
    <location>
        <begin position="155"/>
        <end position="157"/>
    </location>
</feature>
<feature type="strand" evidence="17">
    <location>
        <begin position="160"/>
        <end position="163"/>
    </location>
</feature>
<feature type="turn" evidence="17">
    <location>
        <begin position="167"/>
        <end position="170"/>
    </location>
</feature>
<feature type="helix" evidence="17">
    <location>
        <begin position="171"/>
        <end position="174"/>
    </location>
</feature>
<feature type="turn" evidence="17">
    <location>
        <begin position="185"/>
        <end position="187"/>
    </location>
</feature>
<feature type="helix" evidence="17">
    <location>
        <begin position="192"/>
        <end position="201"/>
    </location>
</feature>
<feature type="helix" evidence="17">
    <location>
        <begin position="204"/>
        <end position="207"/>
    </location>
</feature>
<feature type="helix" evidence="17">
    <location>
        <begin position="209"/>
        <end position="215"/>
    </location>
</feature>
<feature type="strand" evidence="17">
    <location>
        <begin position="224"/>
        <end position="228"/>
    </location>
</feature>
<feature type="helix" evidence="17">
    <location>
        <begin position="233"/>
        <end position="242"/>
    </location>
</feature>
<feature type="helix" evidence="17">
    <location>
        <begin position="253"/>
        <end position="255"/>
    </location>
</feature>
<feature type="helix" evidence="17">
    <location>
        <begin position="264"/>
        <end position="277"/>
    </location>
</feature>
<feature type="strand" evidence="17">
    <location>
        <begin position="278"/>
        <end position="280"/>
    </location>
</feature>
<feature type="strand" evidence="17">
    <location>
        <begin position="283"/>
        <end position="286"/>
    </location>
</feature>
<feature type="helix" evidence="17">
    <location>
        <begin position="289"/>
        <end position="292"/>
    </location>
</feature>
<feature type="turn" evidence="17">
    <location>
        <begin position="302"/>
        <end position="305"/>
    </location>
</feature>
<feature type="helix" evidence="17">
    <location>
        <begin position="306"/>
        <end position="319"/>
    </location>
</feature>
<feature type="strand" evidence="17">
    <location>
        <begin position="322"/>
        <end position="325"/>
    </location>
</feature>
<feature type="strand" evidence="17">
    <location>
        <begin position="328"/>
        <end position="331"/>
    </location>
</feature>
<feature type="helix" evidence="17">
    <location>
        <begin position="341"/>
        <end position="343"/>
    </location>
</feature>
<feature type="strand" evidence="17">
    <location>
        <begin position="344"/>
        <end position="348"/>
    </location>
</feature>
<feature type="helix" evidence="17">
    <location>
        <begin position="359"/>
        <end position="368"/>
    </location>
</feature>
<feature type="turn" evidence="17">
    <location>
        <begin position="369"/>
        <end position="372"/>
    </location>
</feature>
<feature type="helix" evidence="17">
    <location>
        <begin position="381"/>
        <end position="387"/>
    </location>
</feature>
<feature type="helix" evidence="17">
    <location>
        <begin position="393"/>
        <end position="409"/>
    </location>
</feature>
<feature type="strand" evidence="17">
    <location>
        <begin position="413"/>
        <end position="415"/>
    </location>
</feature>
<feature type="helix" evidence="17">
    <location>
        <begin position="417"/>
        <end position="426"/>
    </location>
</feature>
<feature type="turn" evidence="17">
    <location>
        <begin position="427"/>
        <end position="429"/>
    </location>
</feature>
<keyword id="KW-0002">3D-structure</keyword>
<keyword id="KW-0007">Acetylation</keyword>
<keyword id="KW-0067">ATP-binding</keyword>
<keyword id="KW-0898">Cataract</keyword>
<keyword id="KW-0963">Cytoplasm</keyword>
<keyword id="KW-0209">Deafness</keyword>
<keyword id="KW-0903">Direct protein sequencing</keyword>
<keyword id="KW-0945">Host-virus interaction</keyword>
<keyword id="KW-0991">Intellectual disability</keyword>
<keyword id="KW-0622">Neuropathy</keyword>
<keyword id="KW-0547">Nucleotide-binding</keyword>
<keyword id="KW-0539">Nucleus</keyword>
<keyword id="KW-0597">Phosphoprotein</keyword>
<keyword id="KW-0647">Proteasome</keyword>
<keyword id="KW-1267">Proteomics identification</keyword>
<keyword id="KW-1185">Reference proteome</keyword>
<keyword id="KW-0832">Ubl conjugation</keyword>
<name>PRS6A_HUMAN</name>
<comment type="function">
    <text evidence="3">Component of the 26S proteasome, a multiprotein complex involved in the ATP-dependent degradation of ubiquitinated proteins. This complex plays a key role in the maintenance of protein homeostasis by removing misfolded or damaged proteins, which could impair cellular functions, and by removing proteins whose functions are no longer required. Therefore, the proteasome participates in numerous cellular processes, including cell cycle progression, apoptosis, or DNA damage repair. PSMC3 belongs to the heterohexameric ring of AAA (ATPases associated with diverse cellular activities) proteins that unfolds ubiquitinated target proteins that are concurrently translocated into a proteolytic chamber and degraded into peptides.</text>
</comment>
<comment type="subunit">
    <text evidence="4 7 8">Component of the 19S proteasome regulatory particle complex. The 26S proteasome consists of a 20S core particle (CP) and two 19S regulatory subunits (RP). The regulatory particle is made of a lid composed of 9 subunits, a base containing 6 ATPases including PSMC3 and few additional components (PubMed:27342858, PubMed:27428775). Interacts with PAAF1 (PubMed:15831487).</text>
</comment>
<comment type="subunit">
    <text evidence="6">(Microbial infection) Interacts with HIV-1 Tat.</text>
</comment>
<comment type="interaction">
    <interactant intactId="EBI-359720">
        <id>P17980</id>
    </interactant>
    <interactant intactId="EBI-746752">
        <id>Q9Y2J4</id>
        <label>AMOTL2</label>
    </interactant>
    <organismsDiffer>false</organismsDiffer>
    <experiments>5</experiments>
</comment>
<comment type="interaction">
    <interactant intactId="EBI-359720">
        <id>P17980</id>
    </interactant>
    <interactant intactId="EBI-10187270">
        <id>Q9Y2J4-4</id>
        <label>AMOTL2</label>
    </interactant>
    <organismsDiffer>false</organismsDiffer>
    <experiments>5</experiments>
</comment>
<comment type="interaction">
    <interactant intactId="EBI-359720">
        <id>P17980</id>
    </interactant>
    <interactant intactId="EBI-77613">
        <id>P05067</id>
        <label>APP</label>
    </interactant>
    <organismsDiffer>false</organismsDiffer>
    <experiments>6</experiments>
</comment>
<comment type="interaction">
    <interactant intactId="EBI-359720">
        <id>P17980</id>
    </interactant>
    <interactant intactId="EBI-930964">
        <id>P54253</id>
        <label>ATXN1</label>
    </interactant>
    <organismsDiffer>false</organismsDiffer>
    <experiments>7</experiments>
</comment>
<comment type="interaction">
    <interactant intactId="EBI-359720">
        <id>P17980</id>
    </interactant>
    <interactant intactId="EBI-1050662">
        <id>P12532</id>
        <label>CKMT1B</label>
    </interactant>
    <organismsDiffer>false</organismsDiffer>
    <experiments>3</experiments>
</comment>
<comment type="interaction">
    <interactant intactId="EBI-359720">
        <id>P17980</id>
    </interactant>
    <interactant intactId="EBI-25840379">
        <id>Q14203-5</id>
        <label>DCTN1</label>
    </interactant>
    <organismsDiffer>false</organismsDiffer>
    <experiments>3</experiments>
</comment>
<comment type="interaction">
    <interactant intactId="EBI-359720">
        <id>P17980</id>
    </interactant>
    <interactant intactId="EBI-744973">
        <id>Q9C005</id>
        <label>DPY30</label>
    </interactant>
    <organismsDiffer>false</organismsDiffer>
    <experiments>3</experiments>
</comment>
<comment type="interaction">
    <interactant intactId="EBI-359720">
        <id>P17980</id>
    </interactant>
    <interactant intactId="EBI-740282">
        <id>Q9NVF7</id>
        <label>FBXO28</label>
    </interactant>
    <organismsDiffer>false</organismsDiffer>
    <experiments>6</experiments>
</comment>
<comment type="interaction">
    <interactant intactId="EBI-359720">
        <id>P17980</id>
    </interactant>
    <interactant intactId="EBI-517086">
        <id>O43464</id>
        <label>HTRA2</label>
    </interactant>
    <organismsDiffer>false</organismsDiffer>
    <experiments>3</experiments>
</comment>
<comment type="interaction">
    <interactant intactId="EBI-359720">
        <id>P17980</id>
    </interactant>
    <interactant intactId="EBI-466029">
        <id>P42858</id>
        <label>HTT</label>
    </interactant>
    <organismsDiffer>false</organismsDiffer>
    <experiments>6</experiments>
</comment>
<comment type="interaction">
    <interactant intactId="EBI-359720">
        <id>P17980</id>
    </interactant>
    <interactant intactId="EBI-1246261">
        <id>O14561</id>
        <label>NDUFAB1</label>
    </interactant>
    <organismsDiffer>false</organismsDiffer>
    <experiments>6</experiments>
</comment>
<comment type="interaction">
    <interactant intactId="EBI-359720">
        <id>P17980</id>
    </interactant>
    <interactant intactId="EBI-359720">
        <id>P17980</id>
        <label>PSMC3</label>
    </interactant>
    <organismsDiffer>false</organismsDiffer>
    <experiments>4</experiments>
</comment>
<comment type="interaction">
    <interactant intactId="EBI-359720">
        <id>P17980</id>
    </interactant>
    <interactant intactId="EBI-357669">
        <id>P62333</id>
        <label>PSMC6</label>
    </interactant>
    <organismsDiffer>false</organismsDiffer>
    <experiments>20</experiments>
</comment>
<comment type="interaction">
    <interactant intactId="EBI-359720">
        <id>P17980</id>
    </interactant>
    <interactant intactId="EBI-359318">
        <id>P55036</id>
        <label>PSMD4</label>
    </interactant>
    <organismsDiffer>false</organismsDiffer>
    <experiments>3</experiments>
</comment>
<comment type="interaction">
    <interactant intactId="EBI-359720">
        <id>P17980</id>
    </interactant>
    <interactant intactId="EBI-750973">
        <id>O00233</id>
        <label>PSMD9</label>
    </interactant>
    <organismsDiffer>false</organismsDiffer>
    <experiments>21</experiments>
</comment>
<comment type="interaction">
    <interactant intactId="EBI-359720">
        <id>P17980</id>
    </interactant>
    <interactant intactId="EBI-985879">
        <id>P37840</id>
        <label>SNCA</label>
    </interactant>
    <organismsDiffer>false</organismsDiffer>
    <experiments>6</experiments>
</comment>
<comment type="interaction">
    <interactant intactId="EBI-359720">
        <id>P17980</id>
    </interactant>
    <interactant intactId="EBI-990792">
        <id>P00441</id>
        <label>SOD1</label>
    </interactant>
    <organismsDiffer>false</organismsDiffer>
    <experiments>3</experiments>
</comment>
<comment type="interaction">
    <interactant intactId="EBI-359720">
        <id>P17980</id>
    </interactant>
    <interactant intactId="EBI-3650647">
        <id>Q9BUZ4</id>
        <label>TRAF4</label>
    </interactant>
    <organismsDiffer>false</organismsDiffer>
    <experiments>6</experiments>
</comment>
<comment type="interaction">
    <interactant intactId="EBI-359720">
        <id>P17980</id>
    </interactant>
    <interactant intactId="EBI-9977437">
        <id>A8K2R3</id>
    </interactant>
    <organismsDiffer>false</organismsDiffer>
    <experiments>3</experiments>
</comment>
<comment type="interaction">
    <interactant intactId="EBI-359720">
        <id>P17980</id>
    </interactant>
    <interactant intactId="EBI-6692439">
        <id>P03255-1</id>
    </interactant>
    <organismsDiffer>true</organismsDiffer>
    <experiments>2</experiments>
</comment>
<comment type="subcellular location">
    <subcellularLocation>
        <location evidence="10">Cytoplasm</location>
    </subcellularLocation>
    <subcellularLocation>
        <location evidence="10">Nucleus</location>
    </subcellularLocation>
    <text evidence="1">Colocalizes with TRIM5 in the cytoplasmic bodies.</text>
</comment>
<comment type="PTM">
    <text evidence="5">Sumoylated by UBE2I in response to MEKK1-mediated stimuli.</text>
</comment>
<comment type="disease" evidence="9">
    <disease id="DI-06133">
        <name>Deafness, cataract, impaired intellectual development, and polyneuropathy</name>
        <acronym>DCIDP</acronym>
        <description>An autosomal recessive disease characterized by early onset of deafness, cataract, severe developmental delay, and severely impaired intellectual development. Patients later develop polyneuropathy of the lower extremities, associated with depigmentation of the hair in that area.</description>
        <dbReference type="MIM" id="619354"/>
    </disease>
    <text>The disease may be caused by variants affecting the gene represented in this entry.</text>
</comment>
<comment type="similarity">
    <text evidence="10">Belongs to the AAA ATPase family.</text>
</comment>
<comment type="sequence caution" evidence="10">
    <conflict type="erroneous initiation">
        <sequence resource="EMBL-CDS" id="AAI07805"/>
    </conflict>
    <text>Extended N-terminus.</text>
</comment>
<gene>
    <name type="primary">PSMC3</name>
    <name type="synonym">TBP1</name>
</gene>
<dbReference type="EMBL" id="AK313518">
    <property type="protein sequence ID" value="BAG36298.1"/>
    <property type="molecule type" value="mRNA"/>
</dbReference>
<dbReference type="EMBL" id="CH471064">
    <property type="protein sequence ID" value="EAW67916.1"/>
    <property type="molecule type" value="Genomic_DNA"/>
</dbReference>
<dbReference type="EMBL" id="BC008713">
    <property type="protein sequence ID" value="AAH08713.4"/>
    <property type="molecule type" value="mRNA"/>
</dbReference>
<dbReference type="EMBL" id="BC073165">
    <property type="protein sequence ID" value="AAH73165.3"/>
    <property type="molecule type" value="mRNA"/>
</dbReference>
<dbReference type="EMBL" id="BC106920">
    <property type="protein sequence ID" value="AAI06921.1"/>
    <property type="molecule type" value="mRNA"/>
</dbReference>
<dbReference type="EMBL" id="BC107804">
    <property type="protein sequence ID" value="AAI07805.1"/>
    <property type="status" value="ALT_INIT"/>
    <property type="molecule type" value="mRNA"/>
</dbReference>
<dbReference type="EMBL" id="AK222485">
    <property type="protein sequence ID" value="BAD96205.1"/>
    <property type="molecule type" value="mRNA"/>
</dbReference>
<dbReference type="EMBL" id="M34079">
    <property type="protein sequence ID" value="AAA36666.1"/>
    <property type="molecule type" value="mRNA"/>
</dbReference>
<dbReference type="EMBL" id="CR456731">
    <property type="protein sequence ID" value="CAG33012.1"/>
    <property type="molecule type" value="mRNA"/>
</dbReference>
<dbReference type="CCDS" id="CCDS7935.1"/>
<dbReference type="PIR" id="A34832">
    <property type="entry name" value="A34832"/>
</dbReference>
<dbReference type="RefSeq" id="NP_002795.2">
    <property type="nucleotide sequence ID" value="NM_002804.4"/>
</dbReference>
<dbReference type="PDB" id="5GJQ">
    <property type="method" value="EM"/>
    <property type="resolution" value="4.50 A"/>
    <property type="chains" value="M=1-439"/>
</dbReference>
<dbReference type="PDB" id="5GJR">
    <property type="method" value="EM"/>
    <property type="resolution" value="3.50 A"/>
    <property type="chains" value="0/M=1-439"/>
</dbReference>
<dbReference type="PDB" id="5L4G">
    <property type="method" value="EM"/>
    <property type="resolution" value="4.02 A"/>
    <property type="chains" value="M=1-439"/>
</dbReference>
<dbReference type="PDB" id="5LN3">
    <property type="method" value="EM"/>
    <property type="resolution" value="6.80 A"/>
    <property type="chains" value="M=1-439"/>
</dbReference>
<dbReference type="PDB" id="5M32">
    <property type="method" value="EM"/>
    <property type="resolution" value="3.80 A"/>
    <property type="chains" value="g=1-439"/>
</dbReference>
<dbReference type="PDB" id="5T0C">
    <property type="method" value="EM"/>
    <property type="resolution" value="3.80 A"/>
    <property type="chains" value="AF/BF=1-439"/>
</dbReference>
<dbReference type="PDB" id="5T0G">
    <property type="method" value="EM"/>
    <property type="resolution" value="4.40 A"/>
    <property type="chains" value="F=1-439"/>
</dbReference>
<dbReference type="PDB" id="5T0H">
    <property type="method" value="EM"/>
    <property type="resolution" value="6.80 A"/>
    <property type="chains" value="F=1-439"/>
</dbReference>
<dbReference type="PDB" id="5T0I">
    <property type="method" value="EM"/>
    <property type="resolution" value="8.00 A"/>
    <property type="chains" value="F=1-439"/>
</dbReference>
<dbReference type="PDB" id="5T0J">
    <property type="method" value="EM"/>
    <property type="resolution" value="8.00 A"/>
    <property type="chains" value="F=1-439"/>
</dbReference>
<dbReference type="PDB" id="5VFP">
    <property type="method" value="EM"/>
    <property type="resolution" value="4.20 A"/>
    <property type="chains" value="F=44-439"/>
</dbReference>
<dbReference type="PDB" id="5VFQ">
    <property type="method" value="EM"/>
    <property type="resolution" value="4.20 A"/>
    <property type="chains" value="F=44-439"/>
</dbReference>
<dbReference type="PDB" id="5VFR">
    <property type="method" value="EM"/>
    <property type="resolution" value="4.90 A"/>
    <property type="chains" value="F=44-439"/>
</dbReference>
<dbReference type="PDB" id="5VFS">
    <property type="method" value="EM"/>
    <property type="resolution" value="3.60 A"/>
    <property type="chains" value="F=1-439"/>
</dbReference>
<dbReference type="PDB" id="5VFT">
    <property type="method" value="EM"/>
    <property type="resolution" value="7.00 A"/>
    <property type="chains" value="F=63-439"/>
</dbReference>
<dbReference type="PDB" id="5VFU">
    <property type="method" value="EM"/>
    <property type="resolution" value="5.80 A"/>
    <property type="chains" value="F=63-439"/>
</dbReference>
<dbReference type="PDB" id="5VGZ">
    <property type="method" value="EM"/>
    <property type="resolution" value="3.70 A"/>
    <property type="chains" value="F=53-167"/>
</dbReference>
<dbReference type="PDB" id="5VHF">
    <property type="method" value="EM"/>
    <property type="resolution" value="5.70 A"/>
    <property type="chains" value="F=53-432"/>
</dbReference>
<dbReference type="PDB" id="5VHH">
    <property type="method" value="EM"/>
    <property type="resolution" value="6.10 A"/>
    <property type="chains" value="F=53-432"/>
</dbReference>
<dbReference type="PDB" id="5VHI">
    <property type="method" value="EM"/>
    <property type="resolution" value="6.80 A"/>
    <property type="chains" value="F=53-432"/>
</dbReference>
<dbReference type="PDB" id="5VHJ">
    <property type="method" value="EM"/>
    <property type="resolution" value="8.50 A"/>
    <property type="chains" value="F=166-432"/>
</dbReference>
<dbReference type="PDB" id="5VHM">
    <property type="method" value="EM"/>
    <property type="resolution" value="8.30 A"/>
    <property type="chains" value="F=166-432"/>
</dbReference>
<dbReference type="PDB" id="5VHN">
    <property type="method" value="EM"/>
    <property type="resolution" value="7.30 A"/>
    <property type="chains" value="F=166-432"/>
</dbReference>
<dbReference type="PDB" id="5VHO">
    <property type="method" value="EM"/>
    <property type="resolution" value="8.30 A"/>
    <property type="chains" value="F=166-432"/>
</dbReference>
<dbReference type="PDB" id="5VHP">
    <property type="method" value="EM"/>
    <property type="resolution" value="7.90 A"/>
    <property type="chains" value="F=166-432"/>
</dbReference>
<dbReference type="PDB" id="5VHQ">
    <property type="method" value="EM"/>
    <property type="resolution" value="8.90 A"/>
    <property type="chains" value="F=166-432"/>
</dbReference>
<dbReference type="PDB" id="5VHR">
    <property type="method" value="EM"/>
    <property type="resolution" value="7.70 A"/>
    <property type="chains" value="F=166-432"/>
</dbReference>
<dbReference type="PDB" id="5VHS">
    <property type="method" value="EM"/>
    <property type="resolution" value="8.80 A"/>
    <property type="chains" value="F=53-432"/>
</dbReference>
<dbReference type="PDB" id="6MSB">
    <property type="method" value="EM"/>
    <property type="resolution" value="3.00 A"/>
    <property type="chains" value="F=1-439"/>
</dbReference>
<dbReference type="PDB" id="6MSD">
    <property type="method" value="EM"/>
    <property type="resolution" value="3.20 A"/>
    <property type="chains" value="F=1-439"/>
</dbReference>
<dbReference type="PDB" id="6MSE">
    <property type="method" value="EM"/>
    <property type="resolution" value="3.30 A"/>
    <property type="chains" value="F=1-439"/>
</dbReference>
<dbReference type="PDB" id="6MSG">
    <property type="method" value="EM"/>
    <property type="resolution" value="3.50 A"/>
    <property type="chains" value="F=1-439"/>
</dbReference>
<dbReference type="PDB" id="6MSH">
    <property type="method" value="EM"/>
    <property type="resolution" value="3.60 A"/>
    <property type="chains" value="F=1-439"/>
</dbReference>
<dbReference type="PDB" id="6MSJ">
    <property type="method" value="EM"/>
    <property type="resolution" value="3.30 A"/>
    <property type="chains" value="F=1-439"/>
</dbReference>
<dbReference type="PDB" id="6MSK">
    <property type="method" value="EM"/>
    <property type="resolution" value="3.20 A"/>
    <property type="chains" value="F=1-439"/>
</dbReference>
<dbReference type="PDB" id="6WJD">
    <property type="method" value="EM"/>
    <property type="resolution" value="4.80 A"/>
    <property type="chains" value="F=1-439"/>
</dbReference>
<dbReference type="PDB" id="6WJN">
    <property type="method" value="EM"/>
    <property type="resolution" value="5.70 A"/>
    <property type="chains" value="F=44-439"/>
</dbReference>
<dbReference type="PDB" id="7QXN">
    <property type="method" value="EM"/>
    <property type="resolution" value="3.70 A"/>
    <property type="chains" value="F=1-439"/>
</dbReference>
<dbReference type="PDB" id="7QXP">
    <property type="method" value="EM"/>
    <property type="resolution" value="3.60 A"/>
    <property type="chains" value="F=1-439"/>
</dbReference>
<dbReference type="PDB" id="7QXU">
    <property type="method" value="EM"/>
    <property type="resolution" value="4.30 A"/>
    <property type="chains" value="F=1-439"/>
</dbReference>
<dbReference type="PDB" id="7QXW">
    <property type="method" value="EM"/>
    <property type="resolution" value="4.10 A"/>
    <property type="chains" value="F=1-439"/>
</dbReference>
<dbReference type="PDB" id="7QXX">
    <property type="method" value="EM"/>
    <property type="resolution" value="4.40 A"/>
    <property type="chains" value="F=1-439"/>
</dbReference>
<dbReference type="PDB" id="7QY7">
    <property type="method" value="EM"/>
    <property type="resolution" value="4.70 A"/>
    <property type="chains" value="F=1-439"/>
</dbReference>
<dbReference type="PDB" id="7QYA">
    <property type="method" value="EM"/>
    <property type="resolution" value="4.80 A"/>
    <property type="chains" value="F=1-439"/>
</dbReference>
<dbReference type="PDB" id="7QYB">
    <property type="method" value="EM"/>
    <property type="resolution" value="4.10 A"/>
    <property type="chains" value="F=1-439"/>
</dbReference>
<dbReference type="PDB" id="7W37">
    <property type="method" value="EM"/>
    <property type="resolution" value="3.00 A"/>
    <property type="chains" value="F=1-439"/>
</dbReference>
<dbReference type="PDB" id="7W38">
    <property type="method" value="EM"/>
    <property type="resolution" value="3.10 A"/>
    <property type="chains" value="F=1-439"/>
</dbReference>
<dbReference type="PDB" id="7W39">
    <property type="method" value="EM"/>
    <property type="resolution" value="3.20 A"/>
    <property type="chains" value="F=1-439"/>
</dbReference>
<dbReference type="PDB" id="7W3A">
    <property type="method" value="EM"/>
    <property type="resolution" value="3.50 A"/>
    <property type="chains" value="F=1-439"/>
</dbReference>
<dbReference type="PDB" id="7W3B">
    <property type="method" value="EM"/>
    <property type="resolution" value="3.60 A"/>
    <property type="chains" value="F=1-439"/>
</dbReference>
<dbReference type="PDB" id="7W3C">
    <property type="method" value="EM"/>
    <property type="resolution" value="3.40 A"/>
    <property type="chains" value="F=1-439"/>
</dbReference>
<dbReference type="PDB" id="7W3F">
    <property type="method" value="EM"/>
    <property type="resolution" value="3.30 A"/>
    <property type="chains" value="F=1-439"/>
</dbReference>
<dbReference type="PDB" id="7W3G">
    <property type="method" value="EM"/>
    <property type="resolution" value="3.20 A"/>
    <property type="chains" value="F=1-439"/>
</dbReference>
<dbReference type="PDB" id="7W3H">
    <property type="method" value="EM"/>
    <property type="resolution" value="3.20 A"/>
    <property type="chains" value="F=1-439"/>
</dbReference>
<dbReference type="PDB" id="7W3I">
    <property type="method" value="EM"/>
    <property type="resolution" value="3.50 A"/>
    <property type="chains" value="F=1-439"/>
</dbReference>
<dbReference type="PDB" id="7W3J">
    <property type="method" value="EM"/>
    <property type="resolution" value="3.50 A"/>
    <property type="chains" value="F=1-439"/>
</dbReference>
<dbReference type="PDB" id="7W3K">
    <property type="method" value="EM"/>
    <property type="resolution" value="3.60 A"/>
    <property type="chains" value="F=1-439"/>
</dbReference>
<dbReference type="PDB" id="7W3M">
    <property type="method" value="EM"/>
    <property type="resolution" value="3.50 A"/>
    <property type="chains" value="F=1-439"/>
</dbReference>
<dbReference type="PDB" id="8CVT">
    <property type="method" value="EM"/>
    <property type="resolution" value="3.00 A"/>
    <property type="chains" value="F=1-439"/>
</dbReference>
<dbReference type="PDB" id="8JRI">
    <property type="method" value="EM"/>
    <property type="resolution" value="3.40 A"/>
    <property type="chains" value="F=1-439"/>
</dbReference>
<dbReference type="PDB" id="8JRT">
    <property type="method" value="EM"/>
    <property type="resolution" value="3.60 A"/>
    <property type="chains" value="F=1-439"/>
</dbReference>
<dbReference type="PDB" id="8JTI">
    <property type="method" value="EM"/>
    <property type="resolution" value="3.80 A"/>
    <property type="chains" value="F=1-439"/>
</dbReference>
<dbReference type="PDB" id="8K0G">
    <property type="method" value="EM"/>
    <property type="resolution" value="3.80 A"/>
    <property type="chains" value="F=1-439"/>
</dbReference>
<dbReference type="PDB" id="8USB">
    <property type="method" value="EM"/>
    <property type="resolution" value="2.73 A"/>
    <property type="chains" value="F=1-439"/>
</dbReference>
<dbReference type="PDB" id="8USC">
    <property type="method" value="EM"/>
    <property type="resolution" value="3.10 A"/>
    <property type="chains" value="F=1-439"/>
</dbReference>
<dbReference type="PDB" id="9E8G">
    <property type="method" value="EM"/>
    <property type="resolution" value="3.01 A"/>
    <property type="chains" value="F=1-439"/>
</dbReference>
<dbReference type="PDB" id="9E8H">
    <property type="method" value="EM"/>
    <property type="resolution" value="2.90 A"/>
    <property type="chains" value="F=1-439"/>
</dbReference>
<dbReference type="PDB" id="9E8I">
    <property type="method" value="EM"/>
    <property type="resolution" value="2.87 A"/>
    <property type="chains" value="F=1-439"/>
</dbReference>
<dbReference type="PDB" id="9E8J">
    <property type="method" value="EM"/>
    <property type="resolution" value="3.47 A"/>
    <property type="chains" value="F=1-439"/>
</dbReference>
<dbReference type="PDB" id="9E8K">
    <property type="method" value="EM"/>
    <property type="resolution" value="4.08 A"/>
    <property type="chains" value="F=1-439"/>
</dbReference>
<dbReference type="PDB" id="9E8L">
    <property type="method" value="EM"/>
    <property type="resolution" value="3.59 A"/>
    <property type="chains" value="F=1-439"/>
</dbReference>
<dbReference type="PDB" id="9E8N">
    <property type="method" value="EM"/>
    <property type="resolution" value="3.62 A"/>
    <property type="chains" value="F=1-439"/>
</dbReference>
<dbReference type="PDB" id="9E8O">
    <property type="method" value="EM"/>
    <property type="resolution" value="3.10 A"/>
    <property type="chains" value="F=1-439"/>
</dbReference>
<dbReference type="PDB" id="9E8Q">
    <property type="method" value="EM"/>
    <property type="resolution" value="3.16 A"/>
    <property type="chains" value="F=1-439"/>
</dbReference>
<dbReference type="PDBsum" id="5GJQ"/>
<dbReference type="PDBsum" id="5GJR"/>
<dbReference type="PDBsum" id="5L4G"/>
<dbReference type="PDBsum" id="5LN3"/>
<dbReference type="PDBsum" id="5M32"/>
<dbReference type="PDBsum" id="5T0C"/>
<dbReference type="PDBsum" id="5T0G"/>
<dbReference type="PDBsum" id="5T0H"/>
<dbReference type="PDBsum" id="5T0I"/>
<dbReference type="PDBsum" id="5T0J"/>
<dbReference type="PDBsum" id="5VFP"/>
<dbReference type="PDBsum" id="5VFQ"/>
<dbReference type="PDBsum" id="5VFR"/>
<dbReference type="PDBsum" id="5VFS"/>
<dbReference type="PDBsum" id="5VFT"/>
<dbReference type="PDBsum" id="5VFU"/>
<dbReference type="PDBsum" id="5VGZ"/>
<dbReference type="PDBsum" id="5VHF"/>
<dbReference type="PDBsum" id="5VHH"/>
<dbReference type="PDBsum" id="5VHI"/>
<dbReference type="PDBsum" id="5VHJ"/>
<dbReference type="PDBsum" id="5VHM"/>
<dbReference type="PDBsum" id="5VHN"/>
<dbReference type="PDBsum" id="5VHO"/>
<dbReference type="PDBsum" id="5VHP"/>
<dbReference type="PDBsum" id="5VHQ"/>
<dbReference type="PDBsum" id="5VHR"/>
<dbReference type="PDBsum" id="5VHS"/>
<dbReference type="PDBsum" id="6MSB"/>
<dbReference type="PDBsum" id="6MSD"/>
<dbReference type="PDBsum" id="6MSE"/>
<dbReference type="PDBsum" id="6MSG"/>
<dbReference type="PDBsum" id="6MSH"/>
<dbReference type="PDBsum" id="6MSJ"/>
<dbReference type="PDBsum" id="6MSK"/>
<dbReference type="PDBsum" id="6WJD"/>
<dbReference type="PDBsum" id="6WJN"/>
<dbReference type="PDBsum" id="7QXN"/>
<dbReference type="PDBsum" id="7QXP"/>
<dbReference type="PDBsum" id="7QXU"/>
<dbReference type="PDBsum" id="7QXW"/>
<dbReference type="PDBsum" id="7QXX"/>
<dbReference type="PDBsum" id="7QY7"/>
<dbReference type="PDBsum" id="7QYA"/>
<dbReference type="PDBsum" id="7QYB"/>
<dbReference type="PDBsum" id="7W37"/>
<dbReference type="PDBsum" id="7W38"/>
<dbReference type="PDBsum" id="7W39"/>
<dbReference type="PDBsum" id="7W3A"/>
<dbReference type="PDBsum" id="7W3B"/>
<dbReference type="PDBsum" id="7W3C"/>
<dbReference type="PDBsum" id="7W3F"/>
<dbReference type="PDBsum" id="7W3G"/>
<dbReference type="PDBsum" id="7W3H"/>
<dbReference type="PDBsum" id="7W3I"/>
<dbReference type="PDBsum" id="7W3J"/>
<dbReference type="PDBsum" id="7W3K"/>
<dbReference type="PDBsum" id="7W3M"/>
<dbReference type="PDBsum" id="8CVT"/>
<dbReference type="PDBsum" id="8JRI"/>
<dbReference type="PDBsum" id="8JRT"/>
<dbReference type="PDBsum" id="8JTI"/>
<dbReference type="PDBsum" id="8K0G"/>
<dbReference type="PDBsum" id="8USB"/>
<dbReference type="PDBsum" id="8USC"/>
<dbReference type="PDBsum" id="9E8G"/>
<dbReference type="PDBsum" id="9E8H"/>
<dbReference type="PDBsum" id="9E8I"/>
<dbReference type="PDBsum" id="9E8J"/>
<dbReference type="PDBsum" id="9E8K"/>
<dbReference type="PDBsum" id="9E8L"/>
<dbReference type="PDBsum" id="9E8N"/>
<dbReference type="PDBsum" id="9E8O"/>
<dbReference type="PDBsum" id="9E8Q"/>
<dbReference type="EMDB" id="EMD-14201"/>
<dbReference type="EMDB" id="EMD-14202"/>
<dbReference type="EMDB" id="EMD-14203"/>
<dbReference type="EMDB" id="EMD-14204"/>
<dbReference type="EMDB" id="EMD-14205"/>
<dbReference type="EMDB" id="EMD-14209"/>
<dbReference type="EMDB" id="EMD-14210"/>
<dbReference type="EMDB" id="EMD-14211"/>
<dbReference type="EMDB" id="EMD-21691"/>
<dbReference type="EMDB" id="EMD-21696"/>
<dbReference type="EMDB" id="EMD-27018"/>
<dbReference type="EMDB" id="EMD-32272"/>
<dbReference type="EMDB" id="EMD-32273"/>
<dbReference type="EMDB" id="EMD-32274"/>
<dbReference type="EMDB" id="EMD-32275"/>
<dbReference type="EMDB" id="EMD-32276"/>
<dbReference type="EMDB" id="EMD-32277"/>
<dbReference type="EMDB" id="EMD-32278"/>
<dbReference type="EMDB" id="EMD-32279"/>
<dbReference type="EMDB" id="EMD-32280"/>
<dbReference type="EMDB" id="EMD-32281"/>
<dbReference type="EMDB" id="EMD-32282"/>
<dbReference type="EMDB" id="EMD-32283"/>
<dbReference type="EMDB" id="EMD-32284"/>
<dbReference type="EMDB" id="EMD-36598"/>
<dbReference type="EMDB" id="EMD-36605"/>
<dbReference type="EMDB" id="EMD-36645"/>
<dbReference type="EMDB" id="EMD-36764"/>
<dbReference type="EMDB" id="EMD-4089"/>
<dbReference type="EMDB" id="EMD-4146"/>
<dbReference type="EMDB" id="EMD-42506"/>
<dbReference type="EMDB" id="EMD-42507"/>
<dbReference type="EMDB" id="EMD-47719"/>
<dbReference type="EMDB" id="EMD-47720"/>
<dbReference type="EMDB" id="EMD-47721"/>
<dbReference type="EMDB" id="EMD-47722"/>
<dbReference type="EMDB" id="EMD-47723"/>
<dbReference type="EMDB" id="EMD-47724"/>
<dbReference type="EMDB" id="EMD-47725"/>
<dbReference type="EMDB" id="EMD-47726"/>
<dbReference type="EMDB" id="EMD-47727"/>
<dbReference type="EMDB" id="EMD-60138"/>
<dbReference type="EMDB" id="EMD-60139"/>
<dbReference type="EMDB" id="EMD-8663"/>
<dbReference type="EMDB" id="EMD-8664"/>
<dbReference type="EMDB" id="EMD-8665"/>
<dbReference type="EMDB" id="EMD-8666"/>
<dbReference type="EMDB" id="EMD-8667"/>
<dbReference type="EMDB" id="EMD-8668"/>
<dbReference type="EMDB" id="EMD-8672"/>
<dbReference type="EMDB" id="EMD-8674"/>
<dbReference type="EMDB" id="EMD-8675"/>
<dbReference type="EMDB" id="EMD-8676"/>
<dbReference type="EMDB" id="EMD-8677"/>
<dbReference type="EMDB" id="EMD-8678"/>
<dbReference type="EMDB" id="EMD-8679"/>
<dbReference type="EMDB" id="EMD-8680"/>
<dbReference type="EMDB" id="EMD-8681"/>
<dbReference type="EMDB" id="EMD-8682"/>
<dbReference type="EMDB" id="EMD-8683"/>
<dbReference type="EMDB" id="EMD-8684"/>
<dbReference type="EMDB" id="EMD-9216"/>
<dbReference type="EMDB" id="EMD-9217"/>
<dbReference type="EMDB" id="EMD-9218"/>
<dbReference type="EMDB" id="EMD-9219"/>
<dbReference type="EMDB" id="EMD-9220"/>
<dbReference type="EMDB" id="EMD-9221"/>
<dbReference type="EMDB" id="EMD-9222"/>
<dbReference type="EMDB" id="EMD-9511"/>
<dbReference type="EMDB" id="EMD-9512"/>
<dbReference type="SMR" id="P17980"/>
<dbReference type="BioGRID" id="111675">
    <property type="interactions" value="425"/>
</dbReference>
<dbReference type="ComplexPortal" id="CPX-5993">
    <property type="entry name" value="26S proteasome complex"/>
</dbReference>
<dbReference type="ComplexPortal" id="CPX-8964">
    <property type="entry name" value="19S proteasome regulatory complex"/>
</dbReference>
<dbReference type="ComplexPortal" id="CPX-9082">
    <property type="entry name" value="19S-20S-PA28-alphabeta hybrid proteasome complex"/>
</dbReference>
<dbReference type="ComplexPortal" id="CPX-9085">
    <property type="entry name" value="19S-20S-PA28-gamma hybrid proteasome complex"/>
</dbReference>
<dbReference type="ComplexPortal" id="CPX-9086">
    <property type="entry name" value="30S proteasome complex"/>
</dbReference>
<dbReference type="CORUM" id="P17980"/>
<dbReference type="DIP" id="DIP-27555N"/>
<dbReference type="FunCoup" id="P17980">
    <property type="interactions" value="2065"/>
</dbReference>
<dbReference type="IntAct" id="P17980">
    <property type="interactions" value="195"/>
</dbReference>
<dbReference type="MINT" id="P17980"/>
<dbReference type="STRING" id="9606.ENSP00000481029"/>
<dbReference type="ChEMBL" id="CHEMBL2364701"/>
<dbReference type="DrugBank" id="DB12695">
    <property type="generic name" value="Phenethyl Isothiocyanate"/>
</dbReference>
<dbReference type="GlyGen" id="P17980">
    <property type="glycosylation" value="2 sites, 1 N-linked glycan (1 site), 1 O-linked glycan (1 site)"/>
</dbReference>
<dbReference type="iPTMnet" id="P17980"/>
<dbReference type="MetOSite" id="P17980"/>
<dbReference type="PhosphoSitePlus" id="P17980"/>
<dbReference type="SwissPalm" id="P17980"/>
<dbReference type="BioMuta" id="PSMC3"/>
<dbReference type="DMDM" id="20532406"/>
<dbReference type="REPRODUCTION-2DPAGE" id="IPI00018398"/>
<dbReference type="jPOST" id="P17980"/>
<dbReference type="MassIVE" id="P17980"/>
<dbReference type="PaxDb" id="9606-ENSP00000481029"/>
<dbReference type="PeptideAtlas" id="P17980"/>
<dbReference type="PRIDE" id="P17980"/>
<dbReference type="ProteomicsDB" id="53537"/>
<dbReference type="Pumba" id="P17980"/>
<dbReference type="Antibodypedia" id="1816">
    <property type="antibodies" value="559 antibodies from 36 providers"/>
</dbReference>
<dbReference type="DNASU" id="5702"/>
<dbReference type="Ensembl" id="ENST00000298852.8">
    <property type="protein sequence ID" value="ENSP00000298852.3"/>
    <property type="gene ID" value="ENSG00000165916.9"/>
</dbReference>
<dbReference type="Ensembl" id="ENST00000619920.4">
    <property type="protein sequence ID" value="ENSP00000481029.1"/>
    <property type="gene ID" value="ENSG00000165916.9"/>
</dbReference>
<dbReference type="GeneID" id="5702"/>
<dbReference type="KEGG" id="hsa:5702"/>
<dbReference type="MANE-Select" id="ENST00000298852.8">
    <property type="protein sequence ID" value="ENSP00000298852.3"/>
    <property type="RefSeq nucleotide sequence ID" value="NM_002804.5"/>
    <property type="RefSeq protein sequence ID" value="NP_002795.2"/>
</dbReference>
<dbReference type="UCSC" id="uc001nfh.2">
    <property type="organism name" value="human"/>
</dbReference>
<dbReference type="AGR" id="HGNC:9549"/>
<dbReference type="CTD" id="5702"/>
<dbReference type="DisGeNET" id="5702"/>
<dbReference type="GeneCards" id="PSMC3"/>
<dbReference type="HGNC" id="HGNC:9549">
    <property type="gene designation" value="PSMC3"/>
</dbReference>
<dbReference type="HPA" id="ENSG00000165916">
    <property type="expression patterns" value="Low tissue specificity"/>
</dbReference>
<dbReference type="MalaCards" id="PSMC3"/>
<dbReference type="MIM" id="186852">
    <property type="type" value="gene"/>
</dbReference>
<dbReference type="MIM" id="619354">
    <property type="type" value="phenotype"/>
</dbReference>
<dbReference type="neXtProt" id="NX_P17980"/>
<dbReference type="OpenTargets" id="ENSG00000165916"/>
<dbReference type="PharmGKB" id="PA33894"/>
<dbReference type="VEuPathDB" id="HostDB:ENSG00000165916"/>
<dbReference type="eggNOG" id="KOG0652">
    <property type="taxonomic scope" value="Eukaryota"/>
</dbReference>
<dbReference type="GeneTree" id="ENSGT01020000230346"/>
<dbReference type="InParanoid" id="P17980"/>
<dbReference type="OMA" id="NKISHEH"/>
<dbReference type="OrthoDB" id="9443236at2759"/>
<dbReference type="PAN-GO" id="P17980">
    <property type="GO annotations" value="3 GO annotations based on evolutionary models"/>
</dbReference>
<dbReference type="PhylomeDB" id="P17980"/>
<dbReference type="TreeFam" id="TF105648"/>
<dbReference type="PathwayCommons" id="P17980"/>
<dbReference type="Reactome" id="R-HSA-1169091">
    <property type="pathway name" value="Activation of NF-kappaB in B cells"/>
</dbReference>
<dbReference type="Reactome" id="R-HSA-1234176">
    <property type="pathway name" value="Oxygen-dependent proline hydroxylation of Hypoxia-inducible Factor Alpha"/>
</dbReference>
<dbReference type="Reactome" id="R-HSA-1236974">
    <property type="pathway name" value="ER-Phagosome pathway"/>
</dbReference>
<dbReference type="Reactome" id="R-HSA-1236978">
    <property type="pathway name" value="Cross-presentation of soluble exogenous antigens (endosomes)"/>
</dbReference>
<dbReference type="Reactome" id="R-HSA-174084">
    <property type="pathway name" value="Autodegradation of Cdh1 by Cdh1:APC/C"/>
</dbReference>
<dbReference type="Reactome" id="R-HSA-174113">
    <property type="pathway name" value="SCF-beta-TrCP mediated degradation of Emi1"/>
</dbReference>
<dbReference type="Reactome" id="R-HSA-174154">
    <property type="pathway name" value="APC/C:Cdc20 mediated degradation of Securin"/>
</dbReference>
<dbReference type="Reactome" id="R-HSA-174178">
    <property type="pathway name" value="APC/C:Cdh1 mediated degradation of Cdc20 and other APC/C:Cdh1 targeted proteins in late mitosis/early G1"/>
</dbReference>
<dbReference type="Reactome" id="R-HSA-174184">
    <property type="pathway name" value="Cdc20:Phospho-APC/C mediated degradation of Cyclin A"/>
</dbReference>
<dbReference type="Reactome" id="R-HSA-180534">
    <property type="pathway name" value="Vpu mediated degradation of CD4"/>
</dbReference>
<dbReference type="Reactome" id="R-HSA-180585">
    <property type="pathway name" value="Vif-mediated degradation of APOBEC3G"/>
</dbReference>
<dbReference type="Reactome" id="R-HSA-187577">
    <property type="pathway name" value="SCF(Skp2)-mediated degradation of p27/p21"/>
</dbReference>
<dbReference type="Reactome" id="R-HSA-195253">
    <property type="pathway name" value="Degradation of beta-catenin by the destruction complex"/>
</dbReference>
<dbReference type="Reactome" id="R-HSA-202424">
    <property type="pathway name" value="Downstream TCR signaling"/>
</dbReference>
<dbReference type="Reactome" id="R-HSA-211733">
    <property type="pathway name" value="Regulation of activated PAK-2p34 by proteasome mediated degradation"/>
</dbReference>
<dbReference type="Reactome" id="R-HSA-2467813">
    <property type="pathway name" value="Separation of Sister Chromatids"/>
</dbReference>
<dbReference type="Reactome" id="R-HSA-2871837">
    <property type="pathway name" value="FCERI mediated NF-kB activation"/>
</dbReference>
<dbReference type="Reactome" id="R-HSA-349425">
    <property type="pathway name" value="Autodegradation of the E3 ubiquitin ligase COP1"/>
</dbReference>
<dbReference type="Reactome" id="R-HSA-350562">
    <property type="pathway name" value="Regulation of ornithine decarboxylase (ODC)"/>
</dbReference>
<dbReference type="Reactome" id="R-HSA-382556">
    <property type="pathway name" value="ABC-family proteins mediated transport"/>
</dbReference>
<dbReference type="Reactome" id="R-HSA-450408">
    <property type="pathway name" value="AUF1 (hnRNP D0) binds and destabilizes mRNA"/>
</dbReference>
<dbReference type="Reactome" id="R-HSA-4608870">
    <property type="pathway name" value="Asymmetric localization of PCP proteins"/>
</dbReference>
<dbReference type="Reactome" id="R-HSA-4641257">
    <property type="pathway name" value="Degradation of AXIN"/>
</dbReference>
<dbReference type="Reactome" id="R-HSA-4641258">
    <property type="pathway name" value="Degradation of DVL"/>
</dbReference>
<dbReference type="Reactome" id="R-HSA-5358346">
    <property type="pathway name" value="Hedgehog ligand biogenesis"/>
</dbReference>
<dbReference type="Reactome" id="R-HSA-5362768">
    <property type="pathway name" value="Hh mutants are degraded by ERAD"/>
</dbReference>
<dbReference type="Reactome" id="R-HSA-5607761">
    <property type="pathway name" value="Dectin-1 mediated noncanonical NF-kB signaling"/>
</dbReference>
<dbReference type="Reactome" id="R-HSA-5607764">
    <property type="pathway name" value="CLEC7A (Dectin-1) signaling"/>
</dbReference>
<dbReference type="Reactome" id="R-HSA-5610780">
    <property type="pathway name" value="Degradation of GLI1 by the proteasome"/>
</dbReference>
<dbReference type="Reactome" id="R-HSA-5610783">
    <property type="pathway name" value="Degradation of GLI2 by the proteasome"/>
</dbReference>
<dbReference type="Reactome" id="R-HSA-5610785">
    <property type="pathway name" value="GLI3 is processed to GLI3R by the proteasome"/>
</dbReference>
<dbReference type="Reactome" id="R-HSA-5632684">
    <property type="pathway name" value="Hedgehog 'on' state"/>
</dbReference>
<dbReference type="Reactome" id="R-HSA-5658442">
    <property type="pathway name" value="Regulation of RAS by GAPs"/>
</dbReference>
<dbReference type="Reactome" id="R-HSA-5668541">
    <property type="pathway name" value="TNFR2 non-canonical NF-kB pathway"/>
</dbReference>
<dbReference type="Reactome" id="R-HSA-5676590">
    <property type="pathway name" value="NIK--&gt;noncanonical NF-kB signaling"/>
</dbReference>
<dbReference type="Reactome" id="R-HSA-5678895">
    <property type="pathway name" value="Defective CFTR causes cystic fibrosis"/>
</dbReference>
<dbReference type="Reactome" id="R-HSA-5687128">
    <property type="pathway name" value="MAPK6/MAPK4 signaling"/>
</dbReference>
<dbReference type="Reactome" id="R-HSA-5689603">
    <property type="pathway name" value="UCH proteinases"/>
</dbReference>
<dbReference type="Reactome" id="R-HSA-5689880">
    <property type="pathway name" value="Ub-specific processing proteases"/>
</dbReference>
<dbReference type="Reactome" id="R-HSA-6798695">
    <property type="pathway name" value="Neutrophil degranulation"/>
</dbReference>
<dbReference type="Reactome" id="R-HSA-68867">
    <property type="pathway name" value="Assembly of the pre-replicative complex"/>
</dbReference>
<dbReference type="Reactome" id="R-HSA-68949">
    <property type="pathway name" value="Orc1 removal from chromatin"/>
</dbReference>
<dbReference type="Reactome" id="R-HSA-69017">
    <property type="pathway name" value="CDK-mediated phosphorylation and removal of Cdc6"/>
</dbReference>
<dbReference type="Reactome" id="R-HSA-69481">
    <property type="pathway name" value="G2/M Checkpoints"/>
</dbReference>
<dbReference type="Reactome" id="R-HSA-69601">
    <property type="pathway name" value="Ubiquitin Mediated Degradation of Phosphorylated Cdc25A"/>
</dbReference>
<dbReference type="Reactome" id="R-HSA-75815">
    <property type="pathway name" value="Ubiquitin-dependent degradation of Cyclin D"/>
</dbReference>
<dbReference type="Reactome" id="R-HSA-8852276">
    <property type="pathway name" value="The role of GTSE1 in G2/M progression after G2 checkpoint"/>
</dbReference>
<dbReference type="Reactome" id="R-HSA-8854050">
    <property type="pathway name" value="FBXL7 down-regulates AURKA during mitotic entry and in early mitosis"/>
</dbReference>
<dbReference type="Reactome" id="R-HSA-8939236">
    <property type="pathway name" value="RUNX1 regulates transcription of genes involved in differentiation of HSCs"/>
</dbReference>
<dbReference type="Reactome" id="R-HSA-8939902">
    <property type="pathway name" value="Regulation of RUNX2 expression and activity"/>
</dbReference>
<dbReference type="Reactome" id="R-HSA-8941858">
    <property type="pathway name" value="Regulation of RUNX3 expression and activity"/>
</dbReference>
<dbReference type="Reactome" id="R-HSA-8948751">
    <property type="pathway name" value="Regulation of PTEN stability and activity"/>
</dbReference>
<dbReference type="Reactome" id="R-HSA-8951664">
    <property type="pathway name" value="Neddylation"/>
</dbReference>
<dbReference type="Reactome" id="R-HSA-9010553">
    <property type="pathway name" value="Regulation of expression of SLITs and ROBOs"/>
</dbReference>
<dbReference type="Reactome" id="R-HSA-9020702">
    <property type="pathway name" value="Interleukin-1 signaling"/>
</dbReference>
<dbReference type="Reactome" id="R-HSA-9604323">
    <property type="pathway name" value="Negative regulation of NOTCH4 signaling"/>
</dbReference>
<dbReference type="Reactome" id="R-HSA-9755511">
    <property type="pathway name" value="KEAP1-NFE2L2 pathway"/>
</dbReference>
<dbReference type="Reactome" id="R-HSA-9762114">
    <property type="pathway name" value="GSK3B and BTRC:CUL1-mediated-degradation of NFE2L2"/>
</dbReference>
<dbReference type="Reactome" id="R-HSA-9824272">
    <property type="pathway name" value="Somitogenesis"/>
</dbReference>
<dbReference type="Reactome" id="R-HSA-983168">
    <property type="pathway name" value="Antigen processing: Ubiquitination &amp; Proteasome degradation"/>
</dbReference>
<dbReference type="Reactome" id="R-HSA-9907900">
    <property type="pathway name" value="Proteasome assembly"/>
</dbReference>
<dbReference type="SignaLink" id="P17980"/>
<dbReference type="SIGNOR" id="P17980"/>
<dbReference type="BioGRID-ORCS" id="5702">
    <property type="hits" value="842 hits in 1127 CRISPR screens"/>
</dbReference>
<dbReference type="CD-CODE" id="91857CE7">
    <property type="entry name" value="Nucleolus"/>
</dbReference>
<dbReference type="ChiTaRS" id="PSMC3">
    <property type="organism name" value="human"/>
</dbReference>
<dbReference type="GeneWiki" id="PSMC3"/>
<dbReference type="GenomeRNAi" id="5702"/>
<dbReference type="Pharos" id="P17980">
    <property type="development level" value="Tbio"/>
</dbReference>
<dbReference type="PRO" id="PR:P17980"/>
<dbReference type="Proteomes" id="UP000005640">
    <property type="component" value="Chromosome 11"/>
</dbReference>
<dbReference type="RNAct" id="P17980">
    <property type="molecule type" value="protein"/>
</dbReference>
<dbReference type="Bgee" id="ENSG00000165916">
    <property type="expression patterns" value="Expressed in apex of heart and 203 other cell types or tissues"/>
</dbReference>
<dbReference type="ExpressionAtlas" id="P17980">
    <property type="expression patterns" value="baseline and differential"/>
</dbReference>
<dbReference type="GO" id="GO:0005829">
    <property type="term" value="C:cytosol"/>
    <property type="evidence" value="ECO:0000304"/>
    <property type="project" value="Reactome"/>
</dbReference>
<dbReference type="GO" id="GO:0005576">
    <property type="term" value="C:extracellular region"/>
    <property type="evidence" value="ECO:0000304"/>
    <property type="project" value="Reactome"/>
</dbReference>
<dbReference type="GO" id="GO:1904813">
    <property type="term" value="C:ficolin-1-rich granule lumen"/>
    <property type="evidence" value="ECO:0000304"/>
    <property type="project" value="Reactome"/>
</dbReference>
<dbReference type="GO" id="GO:0016020">
    <property type="term" value="C:membrane"/>
    <property type="evidence" value="ECO:0007005"/>
    <property type="project" value="UniProtKB"/>
</dbReference>
<dbReference type="GO" id="GO:0005654">
    <property type="term" value="C:nucleoplasm"/>
    <property type="evidence" value="ECO:0000304"/>
    <property type="project" value="Reactome"/>
</dbReference>
<dbReference type="GO" id="GO:0005634">
    <property type="term" value="C:nucleus"/>
    <property type="evidence" value="ECO:0000314"/>
    <property type="project" value="GO_Central"/>
</dbReference>
<dbReference type="GO" id="GO:0000932">
    <property type="term" value="C:P-body"/>
    <property type="evidence" value="ECO:0000250"/>
    <property type="project" value="UniProtKB"/>
</dbReference>
<dbReference type="GO" id="GO:0022624">
    <property type="term" value="C:proteasome accessory complex"/>
    <property type="evidence" value="ECO:0000250"/>
    <property type="project" value="UniProtKB"/>
</dbReference>
<dbReference type="GO" id="GO:0000502">
    <property type="term" value="C:proteasome complex"/>
    <property type="evidence" value="ECO:0000314"/>
    <property type="project" value="UniProtKB"/>
</dbReference>
<dbReference type="GO" id="GO:0008540">
    <property type="term" value="C:proteasome regulatory particle, base subcomplex"/>
    <property type="evidence" value="ECO:0000318"/>
    <property type="project" value="GO_Central"/>
</dbReference>
<dbReference type="GO" id="GO:0034774">
    <property type="term" value="C:secretory granule lumen"/>
    <property type="evidence" value="ECO:0000304"/>
    <property type="project" value="Reactome"/>
</dbReference>
<dbReference type="GO" id="GO:0005524">
    <property type="term" value="F:ATP binding"/>
    <property type="evidence" value="ECO:0007669"/>
    <property type="project" value="UniProtKB-KW"/>
</dbReference>
<dbReference type="GO" id="GO:0016887">
    <property type="term" value="F:ATP hydrolysis activity"/>
    <property type="evidence" value="ECO:0007669"/>
    <property type="project" value="InterPro"/>
</dbReference>
<dbReference type="GO" id="GO:0042802">
    <property type="term" value="F:identical protein binding"/>
    <property type="evidence" value="ECO:0000353"/>
    <property type="project" value="IntAct"/>
</dbReference>
<dbReference type="GO" id="GO:0036402">
    <property type="term" value="F:proteasome-activating activity"/>
    <property type="evidence" value="ECO:0000250"/>
    <property type="project" value="UniProtKB"/>
</dbReference>
<dbReference type="GO" id="GO:0001824">
    <property type="term" value="P:blastocyst development"/>
    <property type="evidence" value="ECO:0007669"/>
    <property type="project" value="Ensembl"/>
</dbReference>
<dbReference type="GO" id="GO:0043921">
    <property type="term" value="P:modulation by host of viral transcription"/>
    <property type="evidence" value="ECO:0000314"/>
    <property type="project" value="GO_Central"/>
</dbReference>
<dbReference type="GO" id="GO:1901800">
    <property type="term" value="P:positive regulation of proteasomal protein catabolic process"/>
    <property type="evidence" value="ECO:0000305"/>
    <property type="project" value="UniProtKB"/>
</dbReference>
<dbReference type="GO" id="GO:0045944">
    <property type="term" value="P:positive regulation of transcription by RNA polymerase II"/>
    <property type="evidence" value="ECO:0000314"/>
    <property type="project" value="GO_Central"/>
</dbReference>
<dbReference type="GO" id="GO:0043161">
    <property type="term" value="P:proteasome-mediated ubiquitin-dependent protein catabolic process"/>
    <property type="evidence" value="ECO:0000318"/>
    <property type="project" value="GO_Central"/>
</dbReference>
<dbReference type="FunFam" id="1.10.8.60:FF:000009">
    <property type="entry name" value="26S protease regulatory subunit 6A"/>
    <property type="match status" value="1"/>
</dbReference>
<dbReference type="FunFam" id="2.40.50.140:FF:000076">
    <property type="entry name" value="26S protease regulatory subunit 6A"/>
    <property type="match status" value="1"/>
</dbReference>
<dbReference type="FunFam" id="3.40.50.300:FF:000037">
    <property type="entry name" value="26S protease regulatory subunit 6A"/>
    <property type="match status" value="1"/>
</dbReference>
<dbReference type="Gene3D" id="1.10.8.60">
    <property type="match status" value="1"/>
</dbReference>
<dbReference type="Gene3D" id="2.40.50.140">
    <property type="entry name" value="Nucleic acid-binding proteins"/>
    <property type="match status" value="1"/>
</dbReference>
<dbReference type="Gene3D" id="3.40.50.300">
    <property type="entry name" value="P-loop containing nucleotide triphosphate hydrolases"/>
    <property type="match status" value="1"/>
</dbReference>
<dbReference type="InterPro" id="IPR050221">
    <property type="entry name" value="26S_Proteasome_ATPase"/>
</dbReference>
<dbReference type="InterPro" id="IPR003593">
    <property type="entry name" value="AAA+_ATPase"/>
</dbReference>
<dbReference type="InterPro" id="IPR041569">
    <property type="entry name" value="AAA_lid_3"/>
</dbReference>
<dbReference type="InterPro" id="IPR003959">
    <property type="entry name" value="ATPase_AAA_core"/>
</dbReference>
<dbReference type="InterPro" id="IPR003960">
    <property type="entry name" value="ATPase_AAA_CS"/>
</dbReference>
<dbReference type="InterPro" id="IPR012340">
    <property type="entry name" value="NA-bd_OB-fold"/>
</dbReference>
<dbReference type="InterPro" id="IPR027417">
    <property type="entry name" value="P-loop_NTPase"/>
</dbReference>
<dbReference type="InterPro" id="IPR032501">
    <property type="entry name" value="Prot_ATP_ID_OB_2nd"/>
</dbReference>
<dbReference type="PANTHER" id="PTHR23073">
    <property type="entry name" value="26S PROTEASOME REGULATORY SUBUNIT"/>
    <property type="match status" value="1"/>
</dbReference>
<dbReference type="Pfam" id="PF00004">
    <property type="entry name" value="AAA"/>
    <property type="match status" value="1"/>
</dbReference>
<dbReference type="Pfam" id="PF17862">
    <property type="entry name" value="AAA_lid_3"/>
    <property type="match status" value="1"/>
</dbReference>
<dbReference type="Pfam" id="PF16450">
    <property type="entry name" value="Prot_ATP_ID_OB_C"/>
    <property type="match status" value="1"/>
</dbReference>
<dbReference type="SMART" id="SM00382">
    <property type="entry name" value="AAA"/>
    <property type="match status" value="1"/>
</dbReference>
<dbReference type="SUPFAM" id="SSF52540">
    <property type="entry name" value="P-loop containing nucleoside triphosphate hydrolases"/>
    <property type="match status" value="1"/>
</dbReference>
<dbReference type="PROSITE" id="PS00674">
    <property type="entry name" value="AAA"/>
    <property type="match status" value="1"/>
</dbReference>
<accession>P17980</accession>
<accession>B2R8V1</accession>
<accession>Q3B757</accession>
<accession>Q3B865</accession>
<accession>Q53HU5</accession>
<accession>Q6GPG8</accession>
<accession>Q6IBS1</accession>
<accession>Q96HD3</accession>
<sequence>MNLLPNIESPVTRQEKMATVWDEAEQDGIGEEVLKMSTEEIIQRTRLLDSEIKIMKSEVLRVTHELQAMKDKIKENSEKIKVNKTLPYLVSNVIELLDVDPNDQEEDGANIDLDSQRKGKCAVIKTSTRQTYFLPVIGLVDAEKLKPGDLVGVNKDSYLILETLPTEYDSRVKAMEVDERPTEQYSDIGGLDKQIQELVEAIVLPMNHKEKFENLGIQPPKGVLMYGPPGTGKTLLARACAAQTKATFLKLAGPQLVQMFIGDGAKLVRDAFALAKEKAPSIIFIDELDAIGTKRFDSEKAGDREVQRTMLELLNQLDGFQPNTQVKVIAATNRVDILDPALLRSGRLDRKIEFPMPNEEARARIMQIHSRKMNVSPDVNYEELARCTDDFNGAQCKAVCVEAGMIALRRGATELTHEDYMEGILEVQAKKKANLQYYA</sequence>